<dbReference type="EC" id="1.3.5.5"/>
<dbReference type="EMBL" id="X55289">
    <property type="protein sequence ID" value="CAA39004.1"/>
    <property type="molecule type" value="Genomic_DNA"/>
</dbReference>
<dbReference type="EMBL" id="CP000100">
    <property type="protein sequence ID" value="ABB58013.1"/>
    <property type="molecule type" value="Genomic_DNA"/>
</dbReference>
<dbReference type="RefSeq" id="WP_011378266.1">
    <property type="nucleotide sequence ID" value="NZ_JACJTX010000001.1"/>
</dbReference>
<dbReference type="SMR" id="P26294"/>
<dbReference type="STRING" id="1140.Synpcc7942_1983"/>
<dbReference type="ChEMBL" id="CHEMBL2366472"/>
<dbReference type="PaxDb" id="1140-Synpcc7942_1983"/>
<dbReference type="GeneID" id="72430856"/>
<dbReference type="KEGG" id="syf:Synpcc7942_1983"/>
<dbReference type="eggNOG" id="COG0493">
    <property type="taxonomic scope" value="Bacteria"/>
</dbReference>
<dbReference type="eggNOG" id="COG3349">
    <property type="taxonomic scope" value="Bacteria"/>
</dbReference>
<dbReference type="HOGENOM" id="CLU_022687_1_0_3"/>
<dbReference type="OrthoDB" id="438203at2"/>
<dbReference type="BioCyc" id="MetaCyc:SYNPCC7942_0970-MONOMER"/>
<dbReference type="BioCyc" id="SYNEL:SYNPCC7942_0970-MONOMER"/>
<dbReference type="BioCyc" id="SYNEL:SYNPCC7942_1983-MONOMER"/>
<dbReference type="SABIO-RK" id="P26294"/>
<dbReference type="UniPathway" id="UPA00803"/>
<dbReference type="Proteomes" id="UP000889800">
    <property type="component" value="Chromosome"/>
</dbReference>
<dbReference type="GO" id="GO:0005886">
    <property type="term" value="C:plasma membrane"/>
    <property type="evidence" value="ECO:0007669"/>
    <property type="project" value="UniProtKB-SubCell"/>
</dbReference>
<dbReference type="GO" id="GO:0016166">
    <property type="term" value="F:phytoene dehydrogenase activity"/>
    <property type="evidence" value="ECO:0007669"/>
    <property type="project" value="InterPro"/>
</dbReference>
<dbReference type="GO" id="GO:0016117">
    <property type="term" value="P:carotenoid biosynthetic process"/>
    <property type="evidence" value="ECO:0007669"/>
    <property type="project" value="UniProtKB-KW"/>
</dbReference>
<dbReference type="GO" id="GO:0009635">
    <property type="term" value="P:response to herbicide"/>
    <property type="evidence" value="ECO:0007669"/>
    <property type="project" value="UniProtKB-KW"/>
</dbReference>
<dbReference type="FunFam" id="3.50.50.60:FF:000091">
    <property type="entry name" value="15-cis-phytoene desaturase, chloroplastic/chromoplastic"/>
    <property type="match status" value="1"/>
</dbReference>
<dbReference type="Gene3D" id="3.50.50.60">
    <property type="entry name" value="FAD/NAD(P)-binding domain"/>
    <property type="match status" value="1"/>
</dbReference>
<dbReference type="InterPro" id="IPR002937">
    <property type="entry name" value="Amino_oxidase"/>
</dbReference>
<dbReference type="InterPro" id="IPR036188">
    <property type="entry name" value="FAD/NAD-bd_sf"/>
</dbReference>
<dbReference type="InterPro" id="IPR014102">
    <property type="entry name" value="Phytoene_desaturase"/>
</dbReference>
<dbReference type="InterPro" id="IPR050464">
    <property type="entry name" value="Zeta_carotene_desat/Oxidored"/>
</dbReference>
<dbReference type="NCBIfam" id="TIGR02731">
    <property type="entry name" value="phytoene_desat"/>
    <property type="match status" value="1"/>
</dbReference>
<dbReference type="PANTHER" id="PTHR42923:SF45">
    <property type="entry name" value="15-CIS-PHYTOENE DESATURASE, CHLOROPLASTIC_CHROMOPLASTIC"/>
    <property type="match status" value="1"/>
</dbReference>
<dbReference type="PANTHER" id="PTHR42923">
    <property type="entry name" value="PROTOPORPHYRINOGEN OXIDASE"/>
    <property type="match status" value="1"/>
</dbReference>
<dbReference type="Pfam" id="PF01593">
    <property type="entry name" value="Amino_oxidase"/>
    <property type="match status" value="1"/>
</dbReference>
<dbReference type="PRINTS" id="PR00419">
    <property type="entry name" value="ADXRDTASE"/>
</dbReference>
<dbReference type="SUPFAM" id="SSF51905">
    <property type="entry name" value="FAD/NAD(P)-binding domain"/>
    <property type="match status" value="1"/>
</dbReference>
<gene>
    <name type="primary">pds</name>
    <name type="synonym">crtP</name>
    <name type="ordered locus">Synpcc7942_1983</name>
</gene>
<evidence type="ECO:0000269" key="1">
    <source>
    </source>
</evidence>
<evidence type="ECO:0000269" key="2">
    <source>
    </source>
</evidence>
<evidence type="ECO:0000305" key="3"/>
<proteinExistence type="evidence at protein level"/>
<name>PDS_SYNE7</name>
<keyword id="KW-0125">Carotenoid biosynthesis</keyword>
<keyword id="KW-1003">Cell membrane</keyword>
<keyword id="KW-0359">Herbicide resistance</keyword>
<keyword id="KW-0472">Membrane</keyword>
<keyword id="KW-0520">NAD</keyword>
<keyword id="KW-0560">Oxidoreductase</keyword>
<keyword id="KW-1185">Reference proteome</keyword>
<sequence>MRVAIAGAGLAGLSCAKYLADAGHTPIVYERRDVLGGKVAAWKDEDGDWYETGLHIFFGAYPNMLQLFKELNIEDRLQWKSHSMIFNQPTKPGTYSRFDFPDIPAPINGVAAILSNNDMLTWEEKIKFGLGLLPAMIRGQSYVEEMDQYSWTEWLRKQNIPERVNDEVFIAMAKALNFIDPDEISATVVLTALNRFLQEKKGSMMAFLDGAPPERLCQPIVEHVQARGGDVLLNAPLKEFVLNDDSSVQAFRIAGIKGQEEQLIEADAYVSALPVDPLKLLLPDAWKAMPYFQQLDGLQGVPVINIHLWFDRKLTDIDHLLFSRSPLLSVYADMSNTCREYEDPDRSMLELVFAPAKDWIGRSDEDILAATMAEIEKLFPQHFSGENPARLRKYKIVKTPLSVYKATPGRQQYRPDQASPIANFFLTGDYTMQRYLASMEGAVLSGKLTAQAIIARQDELQRRSSGRPLAASQA</sequence>
<comment type="function">
    <text evidence="2">This enzyme converts phytoene into zeta-carotene via the intermediary of phytofluene by the symmetrical introduction of two double bonds at the C-11 and C-11' positions of phytoene. Also active with phytofluene and 1,2-epoxyphytoene as substrates.</text>
</comment>
<comment type="catalytic activity">
    <reaction evidence="2">
        <text>2 a plastoquinone + 15-cis-phytoene = 9,9',15-tri-cis-zeta-carotene + 2 a plastoquinol</text>
        <dbReference type="Rhea" id="RHEA:30287"/>
        <dbReference type="Rhea" id="RHEA-COMP:9561"/>
        <dbReference type="Rhea" id="RHEA-COMP:9562"/>
        <dbReference type="ChEBI" id="CHEBI:17757"/>
        <dbReference type="ChEBI" id="CHEBI:27787"/>
        <dbReference type="ChEBI" id="CHEBI:48717"/>
        <dbReference type="ChEBI" id="CHEBI:62192"/>
        <dbReference type="EC" id="1.3.5.5"/>
    </reaction>
</comment>
<comment type="activity regulation">
    <text>Inhibited by the herbicide norflurazon in a non-competitive way.</text>
</comment>
<comment type="biophysicochemical properties">
    <kinetics>
        <KM evidence="2">3.5 uM for phytoene</KM>
        <KM evidence="2">14.3 mM for NADP</KM>
    </kinetics>
</comment>
<comment type="pathway">
    <text>Carotenoid biosynthesis; lycopene biosynthesis.</text>
</comment>
<comment type="subcellular location">
    <subcellularLocation>
        <location evidence="3">Cell membrane</location>
        <topology evidence="3">Peripheral membrane protein</topology>
    </subcellularLocation>
</comment>
<comment type="induction">
    <text evidence="1">Up-regulated by light.</text>
</comment>
<comment type="miscellaneous">
    <text>Can also use NAD(+) and NADP(+) as electron acceptor under anaerobic conditions.</text>
</comment>
<comment type="similarity">
    <text evidence="3">Belongs to the carotenoid/retinoid oxidoreductase family.</text>
</comment>
<accession>P26294</accession>
<accession>Q31LQ6</accession>
<feature type="chain" id="PRO_0000067697" description="15-cis-phytoene desaturase">
    <location>
        <begin position="1"/>
        <end position="474"/>
    </location>
</feature>
<feature type="sequence variant" description="In strain: NZF4; confers resistance to the herbicide norflurazon.">
    <original>V</original>
    <variation>G</variation>
    <location>
        <position position="403"/>
    </location>
</feature>
<reference key="1">
    <citation type="journal article" date="1991" name="Plant Mol. Biol.">
        <title>The molecular basis of resistance to the herbicide norflurazon.</title>
        <authorList>
            <person name="Chamovitz D."/>
            <person name="Pecker I."/>
            <person name="Hirschberg J."/>
        </authorList>
    </citation>
    <scope>NUCLEOTIDE SEQUENCE [GENOMIC DNA]</scope>
</reference>
<reference key="2">
    <citation type="submission" date="2005-08" db="EMBL/GenBank/DDBJ databases">
        <title>Complete sequence of chromosome 1 of Synechococcus elongatus PCC 7942.</title>
        <authorList>
            <consortium name="US DOE Joint Genome Institute"/>
            <person name="Copeland A."/>
            <person name="Lucas S."/>
            <person name="Lapidus A."/>
            <person name="Barry K."/>
            <person name="Detter J.C."/>
            <person name="Glavina T."/>
            <person name="Hammon N."/>
            <person name="Israni S."/>
            <person name="Pitluck S."/>
            <person name="Schmutz J."/>
            <person name="Larimer F."/>
            <person name="Land M."/>
            <person name="Kyrpides N."/>
            <person name="Lykidis A."/>
            <person name="Golden S."/>
            <person name="Richardson P."/>
        </authorList>
    </citation>
    <scope>NUCLEOTIDE SEQUENCE [LARGE SCALE GENOMIC DNA]</scope>
    <source>
        <strain>ATCC 33912 / PCC 7942 / FACHB-805</strain>
    </source>
</reference>
<reference key="3">
    <citation type="journal article" date="1997" name="Protein Expr. Purif.">
        <title>Phytoene desaturase: heterologous expression in an active state, purification, and biochemical properties.</title>
        <authorList>
            <person name="Schneider C."/>
            <person name="Boger P."/>
            <person name="Sandmann G."/>
        </authorList>
    </citation>
    <scope>FUNCTION</scope>
    <scope>CATALYTIC ACTIVITY</scope>
    <scope>BIOPHYSICOCHEMICAL PROPERTIES</scope>
</reference>
<reference key="4">
    <citation type="journal article" date="2006" name="Plant Cell Environ.">
        <title>Coordinate up-regulation of carotenoid biosynthesis as a response to light stress in Synechococcus PCC7942.</title>
        <authorList>
            <person name="Schafer L."/>
            <person name="Sandmann M."/>
            <person name="Woitsch S."/>
            <person name="Sandmann G."/>
        </authorList>
    </citation>
    <scope>INDUCTION BY LIGHT</scope>
</reference>
<organism>
    <name type="scientific">Synechococcus elongatus (strain ATCC 33912 / PCC 7942 / FACHB-805)</name>
    <name type="common">Anacystis nidulans R2</name>
    <dbReference type="NCBI Taxonomy" id="1140"/>
    <lineage>
        <taxon>Bacteria</taxon>
        <taxon>Bacillati</taxon>
        <taxon>Cyanobacteriota</taxon>
        <taxon>Cyanophyceae</taxon>
        <taxon>Synechococcales</taxon>
        <taxon>Synechococcaceae</taxon>
        <taxon>Synechococcus</taxon>
    </lineage>
</organism>
<protein>
    <recommendedName>
        <fullName>15-cis-phytoene desaturase</fullName>
        <ecNumber>1.3.5.5</ecNumber>
    </recommendedName>
    <alternativeName>
        <fullName>Phytoene dehydrogenase</fullName>
    </alternativeName>
</protein>